<name>ECFA2_STRP8</name>
<organism>
    <name type="scientific">Streptococcus pyogenes serotype M18 (strain MGAS8232)</name>
    <dbReference type="NCBI Taxonomy" id="186103"/>
    <lineage>
        <taxon>Bacteria</taxon>
        <taxon>Bacillati</taxon>
        <taxon>Bacillota</taxon>
        <taxon>Bacilli</taxon>
        <taxon>Lactobacillales</taxon>
        <taxon>Streptococcaceae</taxon>
        <taxon>Streptococcus</taxon>
    </lineage>
</organism>
<keyword id="KW-0067">ATP-binding</keyword>
<keyword id="KW-1003">Cell membrane</keyword>
<keyword id="KW-0472">Membrane</keyword>
<keyword id="KW-0547">Nucleotide-binding</keyword>
<keyword id="KW-1278">Translocase</keyword>
<keyword id="KW-0813">Transport</keyword>
<feature type="chain" id="PRO_0000092111" description="Energy-coupling factor transporter ATP-binding protein EcfA2">
    <location>
        <begin position="1"/>
        <end position="280"/>
    </location>
</feature>
<feature type="domain" description="ABC transporter" evidence="1">
    <location>
        <begin position="3"/>
        <end position="245"/>
    </location>
</feature>
<feature type="binding site" evidence="1">
    <location>
        <begin position="40"/>
        <end position="47"/>
    </location>
    <ligand>
        <name>ATP</name>
        <dbReference type="ChEBI" id="CHEBI:30616"/>
    </ligand>
</feature>
<protein>
    <recommendedName>
        <fullName evidence="1">Energy-coupling factor transporter ATP-binding protein EcfA2</fullName>
        <shortName evidence="1">ECF transporter A component EcfA2</shortName>
        <ecNumber evidence="1">7.-.-.-</ecNumber>
    </recommendedName>
</protein>
<accession>Q7CMM8</accession>
<gene>
    <name evidence="1" type="primary">ecfA2</name>
    <name type="synonym">cbiO2</name>
    <name type="ordered locus">spyM18_2229</name>
</gene>
<dbReference type="EC" id="7.-.-.-" evidence="1"/>
<dbReference type="EMBL" id="AE009949">
    <property type="protein sequence ID" value="AAL98661.1"/>
    <property type="molecule type" value="Genomic_DNA"/>
</dbReference>
<dbReference type="RefSeq" id="WP_002982066.1">
    <property type="nucleotide sequence ID" value="NC_003485.1"/>
</dbReference>
<dbReference type="SMR" id="Q7CMM8"/>
<dbReference type="KEGG" id="spm:spyM18_2229"/>
<dbReference type="HOGENOM" id="CLU_000604_1_22_9"/>
<dbReference type="GO" id="GO:0043190">
    <property type="term" value="C:ATP-binding cassette (ABC) transporter complex"/>
    <property type="evidence" value="ECO:0007669"/>
    <property type="project" value="TreeGrafter"/>
</dbReference>
<dbReference type="GO" id="GO:0005524">
    <property type="term" value="F:ATP binding"/>
    <property type="evidence" value="ECO:0007669"/>
    <property type="project" value="UniProtKB-KW"/>
</dbReference>
<dbReference type="GO" id="GO:0016887">
    <property type="term" value="F:ATP hydrolysis activity"/>
    <property type="evidence" value="ECO:0007669"/>
    <property type="project" value="InterPro"/>
</dbReference>
<dbReference type="GO" id="GO:0042626">
    <property type="term" value="F:ATPase-coupled transmembrane transporter activity"/>
    <property type="evidence" value="ECO:0007669"/>
    <property type="project" value="TreeGrafter"/>
</dbReference>
<dbReference type="CDD" id="cd03225">
    <property type="entry name" value="ABC_cobalt_CbiO_domain1"/>
    <property type="match status" value="1"/>
</dbReference>
<dbReference type="FunFam" id="3.40.50.300:FF:000224">
    <property type="entry name" value="Energy-coupling factor transporter ATP-binding protein EcfA"/>
    <property type="match status" value="1"/>
</dbReference>
<dbReference type="Gene3D" id="3.40.50.300">
    <property type="entry name" value="P-loop containing nucleotide triphosphate hydrolases"/>
    <property type="match status" value="1"/>
</dbReference>
<dbReference type="InterPro" id="IPR003593">
    <property type="entry name" value="AAA+_ATPase"/>
</dbReference>
<dbReference type="InterPro" id="IPR003439">
    <property type="entry name" value="ABC_transporter-like_ATP-bd"/>
</dbReference>
<dbReference type="InterPro" id="IPR017871">
    <property type="entry name" value="ABC_transporter-like_CS"/>
</dbReference>
<dbReference type="InterPro" id="IPR015856">
    <property type="entry name" value="ABC_transpr_CbiO/EcfA_su"/>
</dbReference>
<dbReference type="InterPro" id="IPR050095">
    <property type="entry name" value="ECF_ABC_transporter_ATP-bd"/>
</dbReference>
<dbReference type="InterPro" id="IPR030946">
    <property type="entry name" value="EcfA2"/>
</dbReference>
<dbReference type="InterPro" id="IPR027417">
    <property type="entry name" value="P-loop_NTPase"/>
</dbReference>
<dbReference type="NCBIfam" id="TIGR04521">
    <property type="entry name" value="ECF_ATPase_2"/>
    <property type="match status" value="1"/>
</dbReference>
<dbReference type="PANTHER" id="PTHR43553:SF27">
    <property type="entry name" value="ENERGY-COUPLING FACTOR TRANSPORTER ATP-BINDING PROTEIN ECFA2"/>
    <property type="match status" value="1"/>
</dbReference>
<dbReference type="PANTHER" id="PTHR43553">
    <property type="entry name" value="HEAVY METAL TRANSPORTER"/>
    <property type="match status" value="1"/>
</dbReference>
<dbReference type="Pfam" id="PF00005">
    <property type="entry name" value="ABC_tran"/>
    <property type="match status" value="1"/>
</dbReference>
<dbReference type="SMART" id="SM00382">
    <property type="entry name" value="AAA"/>
    <property type="match status" value="1"/>
</dbReference>
<dbReference type="SUPFAM" id="SSF52540">
    <property type="entry name" value="P-loop containing nucleoside triphosphate hydrolases"/>
    <property type="match status" value="1"/>
</dbReference>
<dbReference type="PROSITE" id="PS00211">
    <property type="entry name" value="ABC_TRANSPORTER_1"/>
    <property type="match status" value="1"/>
</dbReference>
<dbReference type="PROSITE" id="PS50893">
    <property type="entry name" value="ABC_TRANSPORTER_2"/>
    <property type="match status" value="1"/>
</dbReference>
<dbReference type="PROSITE" id="PS51246">
    <property type="entry name" value="CBIO"/>
    <property type="match status" value="1"/>
</dbReference>
<sequence>MSINLQNVSYTYQAGTPFEGRALFNINLDILDGSYTAFIGHTGSGKSTIMQLLNGLHVPTTGIVSVDKQDITNHSKNKEIKSIRKHVGLVFQFPESQLFEETVLKDVAFGPQNFGVSPEEAEALAREKLALVGISENLFEKNPFELSGGQMRRVAIAGILAMQPKVLVLDEPTAGLDPKGRKELMTIFKKLHQSGMTIVLVTHLMDDVANYADFVYVLDKGKIILSGKPKTIFQQVSLLEKKQLGVPKVTKLAQRLVDRGIPISSLPITLEELREVLKHG</sequence>
<proteinExistence type="inferred from homology"/>
<comment type="function">
    <text evidence="1">ATP-binding (A) component of a common energy-coupling factor (ECF) ABC-transporter complex. Unlike classic ABC transporters this ECF transporter provides the energy necessary to transport a number of different substrates.</text>
</comment>
<comment type="subunit">
    <text evidence="1">Forms a stable energy-coupling factor (ECF) transporter complex composed of 2 membrane-embedded substrate-binding proteins (S component), 2 ATP-binding proteins (A component) and 2 transmembrane proteins (T component).</text>
</comment>
<comment type="subcellular location">
    <subcellularLocation>
        <location evidence="1">Cell membrane</location>
        <topology evidence="1">Peripheral membrane protein</topology>
    </subcellularLocation>
</comment>
<comment type="similarity">
    <text evidence="1">Belongs to the ABC transporter superfamily. Energy-coupling factor EcfA family.</text>
</comment>
<reference key="1">
    <citation type="journal article" date="2002" name="Proc. Natl. Acad. Sci. U.S.A.">
        <title>Genome sequence and comparative microarray analysis of serotype M18 group A Streptococcus strains associated with acute rheumatic fever outbreaks.</title>
        <authorList>
            <person name="Smoot J.C."/>
            <person name="Barbian K.D."/>
            <person name="Van Gompel J.J."/>
            <person name="Smoot L.M."/>
            <person name="Chaussee M.S."/>
            <person name="Sylva G.L."/>
            <person name="Sturdevant D.E."/>
            <person name="Ricklefs S.M."/>
            <person name="Porcella S.F."/>
            <person name="Parkins L.D."/>
            <person name="Beres S.B."/>
            <person name="Campbell D.S."/>
            <person name="Smith T.M."/>
            <person name="Zhang Q."/>
            <person name="Kapur V."/>
            <person name="Daly J.A."/>
            <person name="Veasy L.G."/>
            <person name="Musser J.M."/>
        </authorList>
    </citation>
    <scope>NUCLEOTIDE SEQUENCE [LARGE SCALE GENOMIC DNA]</scope>
    <source>
        <strain>MGAS8232</strain>
    </source>
</reference>
<evidence type="ECO:0000255" key="1">
    <source>
        <dbReference type="HAMAP-Rule" id="MF_01710"/>
    </source>
</evidence>